<sequence length="208" mass="21727">MSNLLVLNSSANTGESVSRILIDEAVNQILTAAPGTDVVRRDLGANPVPHLTTANLAGVRGTPSTSEELAARALSDELIAELKAAGTVIIAAPMYNFSVPTSLRSWFDFVLRAGETFKYSEAGPEGLLKGKKVVVLTSRGGLYSEGPAAAADFQEPYLRHLLGFVGITDVTFIHAEKIGFGPEARAAAITGAKGQIAKVAQTFSTVAA</sequence>
<reference key="1">
    <citation type="journal article" date="2006" name="J. Bacteriol.">
        <title>Comparative genomic evidence for a close relationship between the dimorphic prosthecate bacteria Hyphomonas neptunium and Caulobacter crescentus.</title>
        <authorList>
            <person name="Badger J.H."/>
            <person name="Hoover T.R."/>
            <person name="Brun Y.V."/>
            <person name="Weiner R.M."/>
            <person name="Laub M.T."/>
            <person name="Alexandre G."/>
            <person name="Mrazek J."/>
            <person name="Ren Q."/>
            <person name="Paulsen I.T."/>
            <person name="Nelson K.E."/>
            <person name="Khouri H.M."/>
            <person name="Radune D."/>
            <person name="Sosa J."/>
            <person name="Dodson R.J."/>
            <person name="Sullivan S.A."/>
            <person name="Rosovitz M.J."/>
            <person name="Madupu R."/>
            <person name="Brinkac L.M."/>
            <person name="Durkin A.S."/>
            <person name="Daugherty S.C."/>
            <person name="Kothari S.P."/>
            <person name="Giglio M.G."/>
            <person name="Zhou L."/>
            <person name="Haft D.H."/>
            <person name="Selengut J.D."/>
            <person name="Davidsen T.M."/>
            <person name="Yang Q."/>
            <person name="Zafar N."/>
            <person name="Ward N.L."/>
        </authorList>
    </citation>
    <scope>NUCLEOTIDE SEQUENCE [LARGE SCALE GENOMIC DNA]</scope>
    <source>
        <strain>ATCC 15444</strain>
    </source>
</reference>
<accession>Q0C3K3</accession>
<gene>
    <name evidence="1" type="primary">azoR</name>
    <name type="ordered locus">HNE_0965</name>
</gene>
<name>AZOR_HYPNA</name>
<dbReference type="EC" id="1.6.5.-" evidence="1"/>
<dbReference type="EC" id="1.7.1.17" evidence="1"/>
<dbReference type="EMBL" id="CP000158">
    <property type="protein sequence ID" value="ABI78756.1"/>
    <property type="molecule type" value="Genomic_DNA"/>
</dbReference>
<dbReference type="RefSeq" id="WP_011645990.1">
    <property type="nucleotide sequence ID" value="NC_008358.1"/>
</dbReference>
<dbReference type="SMR" id="Q0C3K3"/>
<dbReference type="STRING" id="228405.HNE_0965"/>
<dbReference type="KEGG" id="hne:HNE_0965"/>
<dbReference type="eggNOG" id="COG1182">
    <property type="taxonomic scope" value="Bacteria"/>
</dbReference>
<dbReference type="HOGENOM" id="CLU_088964_0_0_5"/>
<dbReference type="Proteomes" id="UP000001959">
    <property type="component" value="Chromosome"/>
</dbReference>
<dbReference type="GO" id="GO:0009055">
    <property type="term" value="F:electron transfer activity"/>
    <property type="evidence" value="ECO:0007669"/>
    <property type="project" value="UniProtKB-UniRule"/>
</dbReference>
<dbReference type="GO" id="GO:0010181">
    <property type="term" value="F:FMN binding"/>
    <property type="evidence" value="ECO:0007669"/>
    <property type="project" value="UniProtKB-UniRule"/>
</dbReference>
<dbReference type="GO" id="GO:0016652">
    <property type="term" value="F:oxidoreductase activity, acting on NAD(P)H as acceptor"/>
    <property type="evidence" value="ECO:0007669"/>
    <property type="project" value="UniProtKB-UniRule"/>
</dbReference>
<dbReference type="GO" id="GO:0016655">
    <property type="term" value="F:oxidoreductase activity, acting on NAD(P)H, quinone or similar compound as acceptor"/>
    <property type="evidence" value="ECO:0007669"/>
    <property type="project" value="InterPro"/>
</dbReference>
<dbReference type="Gene3D" id="3.40.50.360">
    <property type="match status" value="1"/>
</dbReference>
<dbReference type="HAMAP" id="MF_01216">
    <property type="entry name" value="Azoreductase_type1"/>
    <property type="match status" value="1"/>
</dbReference>
<dbReference type="InterPro" id="IPR003680">
    <property type="entry name" value="Flavodoxin_fold"/>
</dbReference>
<dbReference type="InterPro" id="IPR029039">
    <property type="entry name" value="Flavoprotein-like_sf"/>
</dbReference>
<dbReference type="InterPro" id="IPR050104">
    <property type="entry name" value="FMN-dep_NADH:Q_OxRdtase_AzoR1"/>
</dbReference>
<dbReference type="InterPro" id="IPR023048">
    <property type="entry name" value="NADH:quinone_OxRdtase_FMN_depd"/>
</dbReference>
<dbReference type="PANTHER" id="PTHR43741">
    <property type="entry name" value="FMN-DEPENDENT NADH-AZOREDUCTASE 1"/>
    <property type="match status" value="1"/>
</dbReference>
<dbReference type="PANTHER" id="PTHR43741:SF2">
    <property type="entry name" value="FMN-DEPENDENT NADH:QUINONE OXIDOREDUCTASE"/>
    <property type="match status" value="1"/>
</dbReference>
<dbReference type="Pfam" id="PF02525">
    <property type="entry name" value="Flavodoxin_2"/>
    <property type="match status" value="1"/>
</dbReference>
<dbReference type="SUPFAM" id="SSF52218">
    <property type="entry name" value="Flavoproteins"/>
    <property type="match status" value="1"/>
</dbReference>
<evidence type="ECO:0000255" key="1">
    <source>
        <dbReference type="HAMAP-Rule" id="MF_01216"/>
    </source>
</evidence>
<keyword id="KW-0285">Flavoprotein</keyword>
<keyword id="KW-0288">FMN</keyword>
<keyword id="KW-0520">NAD</keyword>
<keyword id="KW-0560">Oxidoreductase</keyword>
<keyword id="KW-1185">Reference proteome</keyword>
<comment type="function">
    <text evidence="1">Quinone reductase that provides resistance to thiol-specific stress caused by electrophilic quinones.</text>
</comment>
<comment type="function">
    <text evidence="1">Also exhibits azoreductase activity. Catalyzes the reductive cleavage of the azo bond in aromatic azo compounds to the corresponding amines.</text>
</comment>
<comment type="catalytic activity">
    <reaction evidence="1">
        <text>2 a quinone + NADH + H(+) = 2 a 1,4-benzosemiquinone + NAD(+)</text>
        <dbReference type="Rhea" id="RHEA:65952"/>
        <dbReference type="ChEBI" id="CHEBI:15378"/>
        <dbReference type="ChEBI" id="CHEBI:57540"/>
        <dbReference type="ChEBI" id="CHEBI:57945"/>
        <dbReference type="ChEBI" id="CHEBI:132124"/>
        <dbReference type="ChEBI" id="CHEBI:134225"/>
    </reaction>
</comment>
<comment type="catalytic activity">
    <reaction evidence="1">
        <text>N,N-dimethyl-1,4-phenylenediamine + anthranilate + 2 NAD(+) = 2-(4-dimethylaminophenyl)diazenylbenzoate + 2 NADH + 2 H(+)</text>
        <dbReference type="Rhea" id="RHEA:55872"/>
        <dbReference type="ChEBI" id="CHEBI:15378"/>
        <dbReference type="ChEBI" id="CHEBI:15783"/>
        <dbReference type="ChEBI" id="CHEBI:16567"/>
        <dbReference type="ChEBI" id="CHEBI:57540"/>
        <dbReference type="ChEBI" id="CHEBI:57945"/>
        <dbReference type="ChEBI" id="CHEBI:71579"/>
        <dbReference type="EC" id="1.7.1.17"/>
    </reaction>
</comment>
<comment type="cofactor">
    <cofactor evidence="1">
        <name>FMN</name>
        <dbReference type="ChEBI" id="CHEBI:58210"/>
    </cofactor>
    <text evidence="1">Binds 1 FMN per subunit.</text>
</comment>
<comment type="subunit">
    <text evidence="1">Homodimer.</text>
</comment>
<comment type="similarity">
    <text evidence="1">Belongs to the azoreductase type 1 family.</text>
</comment>
<protein>
    <recommendedName>
        <fullName evidence="1">FMN-dependent NADH:quinone oxidoreductase</fullName>
        <ecNumber evidence="1">1.6.5.-</ecNumber>
    </recommendedName>
    <alternativeName>
        <fullName evidence="1">Azo-dye reductase</fullName>
    </alternativeName>
    <alternativeName>
        <fullName evidence="1">FMN-dependent NADH-azo compound oxidoreductase</fullName>
    </alternativeName>
    <alternativeName>
        <fullName evidence="1">FMN-dependent NADH-azoreductase</fullName>
        <ecNumber evidence="1">1.7.1.17</ecNumber>
    </alternativeName>
</protein>
<feature type="chain" id="PRO_1000066514" description="FMN-dependent NADH:quinone oxidoreductase">
    <location>
        <begin position="1"/>
        <end position="208"/>
    </location>
</feature>
<feature type="binding site" evidence="1">
    <location>
        <position position="10"/>
    </location>
    <ligand>
        <name>FMN</name>
        <dbReference type="ChEBI" id="CHEBI:58210"/>
    </ligand>
</feature>
<feature type="binding site" evidence="1">
    <location>
        <begin position="16"/>
        <end position="18"/>
    </location>
    <ligand>
        <name>FMN</name>
        <dbReference type="ChEBI" id="CHEBI:58210"/>
    </ligand>
</feature>
<feature type="binding site" evidence="1">
    <location>
        <begin position="94"/>
        <end position="97"/>
    </location>
    <ligand>
        <name>FMN</name>
        <dbReference type="ChEBI" id="CHEBI:58210"/>
    </ligand>
</feature>
<feature type="binding site" evidence="1">
    <location>
        <begin position="138"/>
        <end position="141"/>
    </location>
    <ligand>
        <name>FMN</name>
        <dbReference type="ChEBI" id="CHEBI:58210"/>
    </ligand>
</feature>
<proteinExistence type="inferred from homology"/>
<organism>
    <name type="scientific">Hyphomonas neptunium (strain ATCC 15444)</name>
    <dbReference type="NCBI Taxonomy" id="228405"/>
    <lineage>
        <taxon>Bacteria</taxon>
        <taxon>Pseudomonadati</taxon>
        <taxon>Pseudomonadota</taxon>
        <taxon>Alphaproteobacteria</taxon>
        <taxon>Hyphomonadales</taxon>
        <taxon>Hyphomonadaceae</taxon>
        <taxon>Hyphomonas</taxon>
    </lineage>
</organism>